<organism>
    <name type="scientific">Vaccinia virus (strain Western Reserve)</name>
    <name type="common">VACV</name>
    <name type="synonym">Vaccinia virus (strain WR)</name>
    <dbReference type="NCBI Taxonomy" id="10254"/>
    <lineage>
        <taxon>Viruses</taxon>
        <taxon>Varidnaviria</taxon>
        <taxon>Bamfordvirae</taxon>
        <taxon>Nucleocytoviricota</taxon>
        <taxon>Pokkesviricetes</taxon>
        <taxon>Chitovirales</taxon>
        <taxon>Poxviridae</taxon>
        <taxon>Chordopoxvirinae</taxon>
        <taxon>Orthopoxvirus</taxon>
        <taxon>Vaccinia virus</taxon>
    </lineage>
</organism>
<name>PG163_VACCW</name>
<proteinExistence type="evidence at transcript level"/>
<keyword id="KW-1039">Host endosome</keyword>
<keyword id="KW-0945">Host-virus interaction</keyword>
<keyword id="KW-1080">Inhibition of host adaptive immune response by virus</keyword>
<keyword id="KW-1116">Inhibition of host MHC class II molecule presentation by virus</keyword>
<keyword id="KW-1185">Reference proteome</keyword>
<keyword id="KW-0732">Signal</keyword>
<keyword id="KW-0899">Viral immunoevasion</keyword>
<gene>
    <name type="primary">OPG163</name>
    <name type="ordered locus">VACWR158</name>
    <name type="ORF">A35R</name>
</gene>
<accession>Q01232</accession>
<accession>Q76ZP1</accession>
<protein>
    <recommendedName>
        <fullName>Protein OPG163</fullName>
    </recommendedName>
</protein>
<sequence length="176" mass="20031">MDAAFVITPMGVLTITDTLYDDLDISIMDFIGPYIIGNIKTVQIDVRDIKYSDMQKCYFSYKGKIVPQDSNDLARFNIYSICAAYRSKNTIIIACDYDIMLDIEDKHQPFYLFPSIDVFNATIIEAYNLYTAGDYHLIINPSDNLKMKLLFNSSFCISDGNGWIIIDGKCNSNFLS</sequence>
<organismHost>
    <name type="scientific">Bos taurus</name>
    <name type="common">Bovine</name>
    <dbReference type="NCBI Taxonomy" id="9913"/>
</organismHost>
<dbReference type="EMBL" id="D11079">
    <property type="protein sequence ID" value="BAA01807.1"/>
    <property type="molecule type" value="Genomic_DNA"/>
</dbReference>
<dbReference type="EMBL" id="X57318">
    <property type="protein sequence ID" value="CAA40584.1"/>
    <property type="molecule type" value="Genomic_DNA"/>
</dbReference>
<dbReference type="EMBL" id="AY243312">
    <property type="protein sequence ID" value="AAO89437.1"/>
    <property type="molecule type" value="Genomic_DNA"/>
</dbReference>
<dbReference type="PIR" id="S29918">
    <property type="entry name" value="S29918"/>
</dbReference>
<dbReference type="RefSeq" id="YP_233040.1">
    <property type="nucleotide sequence ID" value="NC_006998.1"/>
</dbReference>
<dbReference type="DNASU" id="3707688"/>
<dbReference type="GeneID" id="3707688"/>
<dbReference type="KEGG" id="vg:3707688"/>
<dbReference type="Proteomes" id="UP000000344">
    <property type="component" value="Genome"/>
</dbReference>
<dbReference type="GO" id="GO:0044174">
    <property type="term" value="C:host cell endosome"/>
    <property type="evidence" value="ECO:0007669"/>
    <property type="project" value="UniProtKB-SubCell"/>
</dbReference>
<dbReference type="GO" id="GO:0039505">
    <property type="term" value="P:symbiont-mediated suppression of host antigen processing and presentation of peptide antigen via MHC class II"/>
    <property type="evidence" value="ECO:0007669"/>
    <property type="project" value="UniProtKB-KW"/>
</dbReference>
<dbReference type="InterPro" id="IPR009247">
    <property type="entry name" value="Chordopox_A35R"/>
</dbReference>
<dbReference type="Pfam" id="PF05989">
    <property type="entry name" value="Chordopox_A35R"/>
    <property type="match status" value="1"/>
</dbReference>
<reference key="1">
    <citation type="journal article" date="1991" name="J. Gen. Virol.">
        <title>Nucleotide sequence of 42 kbp of vaccinia virus strain WR from near the right inverted terminal repeat.</title>
        <authorList>
            <person name="Smith G.L."/>
            <person name="Chan Y.S."/>
            <person name="Howard S.T."/>
        </authorList>
    </citation>
    <scope>NUCLEOTIDE SEQUENCE [GENOMIC DNA]</scope>
</reference>
<reference key="2">
    <citation type="journal article" date="1991" name="J. Biol. Chem.">
        <title>Identification, sequence, and expression of the gene encoding a Mr 35,000 subunit of the vaccinia virus DNA-dependent RNA polymerase.</title>
        <authorList>
            <person name="Amegadzie B.Y."/>
            <person name="Ahn B.-Y."/>
            <person name="Moss B."/>
        </authorList>
    </citation>
    <scope>NUCLEOTIDE SEQUENCE [GENOMIC DNA]</scope>
</reference>
<reference key="3">
    <citation type="submission" date="2003-02" db="EMBL/GenBank/DDBJ databases">
        <title>Sequencing of the coding region of Vaccinia-WR to an average 9-fold redundancy and an error rate of 0.16/10kb.</title>
        <authorList>
            <person name="Esposito J.J."/>
            <person name="Frace A.M."/>
            <person name="Sammons S.A."/>
            <person name="Olsen-Rasmussen M."/>
            <person name="Osborne J."/>
            <person name="Wohlhueter R."/>
        </authorList>
    </citation>
    <scope>NUCLEOTIDE SEQUENCE [LARGE SCALE GENOMIC DNA]</scope>
</reference>
<reference key="4">
    <citation type="journal article" date="2006" name="J. Virol.">
        <title>Characterization of the vaccinia virus A35R protein and its role in virulence.</title>
        <authorList>
            <person name="Roper R.L."/>
        </authorList>
    </citation>
    <scope>INDUCTION</scope>
</reference>
<reference key="5">
    <citation type="journal article" date="2010" name="J. Virol.">
        <title>The poxvirus A35 protein is an immunoregulator.</title>
        <authorList>
            <person name="Rehm K.E."/>
            <person name="Jones G.J."/>
            <person name="Tripp A.A."/>
            <person name="Metcalf M.W."/>
            <person name="Roper R.L."/>
        </authorList>
    </citation>
    <scope>FUNCTION</scope>
</reference>
<reference key="6">
    <citation type="journal article" date="2010" name="Virology">
        <title>Vaccinia virus A35R inhibits MHC class II antigen presentation.</title>
        <authorList>
            <person name="Rehm K.E."/>
            <person name="Connor R.F."/>
            <person name="Jones G.J."/>
            <person name="Yimbu K."/>
            <person name="Roper R.L."/>
        </authorList>
    </citation>
    <scope>FUNCTION</scope>
    <scope>SUBCELLULAR LOCATION</scope>
</reference>
<evidence type="ECO:0000255" key="1"/>
<evidence type="ECO:0000269" key="2">
    <source>
    </source>
</evidence>
<evidence type="ECO:0000269" key="3">
    <source>
    </source>
</evidence>
<evidence type="ECO:0000269" key="4">
    <source>
    </source>
</evidence>
<evidence type="ECO:0000305" key="5"/>
<feature type="signal peptide" evidence="1">
    <location>
        <begin position="1"/>
        <end position="14"/>
    </location>
</feature>
<feature type="chain" id="PRO_0000040598" description="Protein OPG163">
    <location>
        <begin position="15"/>
        <end position="176"/>
    </location>
</feature>
<comment type="function">
    <text evidence="3 4">Mildly affects the expression of MHC class II molecules on the surface of host antigen presenting cells (APCs).</text>
</comment>
<comment type="subcellular location">
    <subcellularLocation>
        <location evidence="4">Host endosome</location>
    </subcellularLocation>
</comment>
<comment type="induction">
    <text evidence="2">Expressed in the early phase of the viral replicative cycle.</text>
</comment>
<comment type="similarity">
    <text evidence="5">Belongs to the orthopoxvirus OPG163 family.</text>
</comment>